<organism>
    <name type="scientific">Drosophila mimica</name>
    <name type="common">Fruit fly</name>
    <name type="synonym">Idiomyia mimica</name>
    <dbReference type="NCBI Taxonomy" id="7270"/>
    <lineage>
        <taxon>Eukaryota</taxon>
        <taxon>Metazoa</taxon>
        <taxon>Ecdysozoa</taxon>
        <taxon>Arthropoda</taxon>
        <taxon>Hexapoda</taxon>
        <taxon>Insecta</taxon>
        <taxon>Pterygota</taxon>
        <taxon>Neoptera</taxon>
        <taxon>Endopterygota</taxon>
        <taxon>Diptera</taxon>
        <taxon>Brachycera</taxon>
        <taxon>Muscomorpha</taxon>
        <taxon>Ephydroidea</taxon>
        <taxon>Drosophilidae</taxon>
        <taxon>Drosophila</taxon>
        <taxon>Hawaiian Drosophila</taxon>
    </lineage>
</organism>
<gene>
    <name type="primary">Adh</name>
</gene>
<dbReference type="EC" id="1.1.1.1"/>
<dbReference type="EMBL" id="M60792">
    <property type="protein sequence ID" value="AAA72981.1"/>
    <property type="molecule type" value="Genomic_DNA"/>
</dbReference>
<dbReference type="SMR" id="Q00671"/>
<dbReference type="GO" id="GO:0005737">
    <property type="term" value="C:cytoplasm"/>
    <property type="evidence" value="ECO:0007669"/>
    <property type="project" value="TreeGrafter"/>
</dbReference>
<dbReference type="GO" id="GO:0004022">
    <property type="term" value="F:alcohol dehydrogenase (NAD+) activity"/>
    <property type="evidence" value="ECO:0007669"/>
    <property type="project" value="UniProtKB-EC"/>
</dbReference>
<dbReference type="GO" id="GO:0006066">
    <property type="term" value="P:alcohol metabolic process"/>
    <property type="evidence" value="ECO:0007669"/>
    <property type="project" value="InterPro"/>
</dbReference>
<dbReference type="CDD" id="cd05323">
    <property type="entry name" value="ADH_SDR_c_like"/>
    <property type="match status" value="1"/>
</dbReference>
<dbReference type="FunFam" id="3.40.50.720:FF:000302">
    <property type="entry name" value="Alcohol dehydrogenase"/>
    <property type="match status" value="1"/>
</dbReference>
<dbReference type="Gene3D" id="3.40.50.720">
    <property type="entry name" value="NAD(P)-binding Rossmann-like Domain"/>
    <property type="match status" value="1"/>
</dbReference>
<dbReference type="InterPro" id="IPR002425">
    <property type="entry name" value="ADH_Drosophila-type"/>
</dbReference>
<dbReference type="InterPro" id="IPR036291">
    <property type="entry name" value="NAD(P)-bd_dom_sf"/>
</dbReference>
<dbReference type="InterPro" id="IPR020904">
    <property type="entry name" value="Sc_DH/Rdtase_CS"/>
</dbReference>
<dbReference type="InterPro" id="IPR002347">
    <property type="entry name" value="SDR_fam"/>
</dbReference>
<dbReference type="PANTHER" id="PTHR44229">
    <property type="entry name" value="15-HYDROXYPROSTAGLANDIN DEHYDROGENASE [NAD(+)]"/>
    <property type="match status" value="1"/>
</dbReference>
<dbReference type="PANTHER" id="PTHR44229:SF8">
    <property type="entry name" value="ALCOHOL DEHYDROGENASE-RELATED"/>
    <property type="match status" value="1"/>
</dbReference>
<dbReference type="Pfam" id="PF00106">
    <property type="entry name" value="adh_short"/>
    <property type="match status" value="1"/>
</dbReference>
<dbReference type="PRINTS" id="PR01168">
    <property type="entry name" value="ALCDHDRGNASE"/>
</dbReference>
<dbReference type="PRINTS" id="PR01167">
    <property type="entry name" value="INSADHFAMILY"/>
</dbReference>
<dbReference type="PRINTS" id="PR00080">
    <property type="entry name" value="SDRFAMILY"/>
</dbReference>
<dbReference type="SUPFAM" id="SSF51735">
    <property type="entry name" value="NAD(P)-binding Rossmann-fold domains"/>
    <property type="match status" value="1"/>
</dbReference>
<dbReference type="PROSITE" id="PS00061">
    <property type="entry name" value="ADH_SHORT"/>
    <property type="match status" value="1"/>
</dbReference>
<feature type="initiator methionine" description="Removed" evidence="1">
    <location>
        <position position="1"/>
    </location>
</feature>
<feature type="chain" id="PRO_0000054475" description="Alcohol dehydrogenase">
    <location>
        <begin position="2"/>
        <end position="254"/>
    </location>
</feature>
<feature type="active site" description="Proton acceptor" evidence="2">
    <location>
        <position position="151"/>
    </location>
</feature>
<feature type="binding site" evidence="1">
    <location>
        <begin position="10"/>
        <end position="33"/>
    </location>
    <ligand>
        <name>NAD(+)</name>
        <dbReference type="ChEBI" id="CHEBI:57540"/>
    </ligand>
</feature>
<feature type="binding site" evidence="1">
    <location>
        <position position="138"/>
    </location>
    <ligand>
        <name>substrate</name>
    </ligand>
</feature>
<evidence type="ECO:0000250" key="1"/>
<evidence type="ECO:0000255" key="2">
    <source>
        <dbReference type="PROSITE-ProRule" id="PRU10001"/>
    </source>
</evidence>
<evidence type="ECO:0000305" key="3"/>
<name>ADH_DROMM</name>
<accession>Q00671</accession>
<comment type="catalytic activity">
    <reaction evidence="2">
        <text>a primary alcohol + NAD(+) = an aldehyde + NADH + H(+)</text>
        <dbReference type="Rhea" id="RHEA:10736"/>
        <dbReference type="ChEBI" id="CHEBI:15378"/>
        <dbReference type="ChEBI" id="CHEBI:15734"/>
        <dbReference type="ChEBI" id="CHEBI:17478"/>
        <dbReference type="ChEBI" id="CHEBI:57540"/>
        <dbReference type="ChEBI" id="CHEBI:57945"/>
        <dbReference type="EC" id="1.1.1.1"/>
    </reaction>
</comment>
<comment type="catalytic activity">
    <reaction evidence="2">
        <text>a secondary alcohol + NAD(+) = a ketone + NADH + H(+)</text>
        <dbReference type="Rhea" id="RHEA:10740"/>
        <dbReference type="ChEBI" id="CHEBI:15378"/>
        <dbReference type="ChEBI" id="CHEBI:17087"/>
        <dbReference type="ChEBI" id="CHEBI:35681"/>
        <dbReference type="ChEBI" id="CHEBI:57540"/>
        <dbReference type="ChEBI" id="CHEBI:57945"/>
        <dbReference type="EC" id="1.1.1.1"/>
    </reaction>
</comment>
<comment type="subunit">
    <text>Homodimer.</text>
</comment>
<comment type="similarity">
    <text evidence="3">Belongs to the short-chain dehydrogenases/reductases (SDR) family.</text>
</comment>
<keyword id="KW-0520">NAD</keyword>
<keyword id="KW-0560">Oxidoreductase</keyword>
<sequence>MVIANSNIIFVAGLGGIGLDTSREIVKSGPKNLVLLDRIDNPAAIAELSALNPKVTVTFYPYDVTVPLAETKKLLKTIFDKLKTVDLLINGAGILDDHQIERTIAVNFTGTVNTTTAIMDFWDKRNGGPGGVIANICSVTGFNSIYQVPVYSASKAAALSFTNSLARLASVTGVTAYSINPGITKTVLVHKFNSWLNVEPRVAELLLEHPTQTTVQCAQNFVKAIEANQNGAIWKLDLGRLDPIEWTKHWDSGI</sequence>
<reference key="1">
    <citation type="journal article" date="1991" name="Mol. Biol. Evol.">
        <title>The molecular evolution of the alcohol dehydrogenase locus and the phylogeny of Hawaiian Drosophila.</title>
        <authorList>
            <person name="Thomas R.H."/>
            <person name="Hunt J.A."/>
        </authorList>
    </citation>
    <scope>NUCLEOTIDE SEQUENCE [GENOMIC DNA]</scope>
</reference>
<protein>
    <recommendedName>
        <fullName>Alcohol dehydrogenase</fullName>
        <ecNumber>1.1.1.1</ecNumber>
    </recommendedName>
</protein>
<proteinExistence type="inferred from homology"/>